<accession>Q3APK2</accession>
<evidence type="ECO:0000255" key="1">
    <source>
        <dbReference type="HAMAP-Rule" id="MF_00074"/>
    </source>
</evidence>
<feature type="chain" id="PRO_0000335332" description="Ribosomal RNA small subunit methyltransferase G">
    <location>
        <begin position="1"/>
        <end position="234"/>
    </location>
</feature>
<feature type="binding site" evidence="1">
    <location>
        <position position="96"/>
    </location>
    <ligand>
        <name>S-adenosyl-L-methionine</name>
        <dbReference type="ChEBI" id="CHEBI:59789"/>
    </ligand>
</feature>
<feature type="binding site" evidence="1">
    <location>
        <position position="101"/>
    </location>
    <ligand>
        <name>S-adenosyl-L-methionine</name>
        <dbReference type="ChEBI" id="CHEBI:59789"/>
    </ligand>
</feature>
<feature type="binding site" evidence="1">
    <location>
        <begin position="119"/>
        <end position="121"/>
    </location>
    <ligand>
        <name>S-adenosyl-L-methionine</name>
        <dbReference type="ChEBI" id="CHEBI:59789"/>
    </ligand>
</feature>
<feature type="binding site" evidence="1">
    <location>
        <begin position="147"/>
        <end position="148"/>
    </location>
    <ligand>
        <name>S-adenosyl-L-methionine</name>
        <dbReference type="ChEBI" id="CHEBI:59789"/>
    </ligand>
</feature>
<feature type="binding site" evidence="1">
    <location>
        <position position="161"/>
    </location>
    <ligand>
        <name>S-adenosyl-L-methionine</name>
        <dbReference type="ChEBI" id="CHEBI:59789"/>
    </ligand>
</feature>
<name>RSMG_CHLCH</name>
<keyword id="KW-0963">Cytoplasm</keyword>
<keyword id="KW-0489">Methyltransferase</keyword>
<keyword id="KW-0698">rRNA processing</keyword>
<keyword id="KW-0949">S-adenosyl-L-methionine</keyword>
<keyword id="KW-0808">Transferase</keyword>
<organism>
    <name type="scientific">Chlorobium chlorochromatii (strain CaD3)</name>
    <dbReference type="NCBI Taxonomy" id="340177"/>
    <lineage>
        <taxon>Bacteria</taxon>
        <taxon>Pseudomonadati</taxon>
        <taxon>Chlorobiota</taxon>
        <taxon>Chlorobiia</taxon>
        <taxon>Chlorobiales</taxon>
        <taxon>Chlorobiaceae</taxon>
        <taxon>Chlorobium/Pelodictyon group</taxon>
        <taxon>Chlorobium</taxon>
    </lineage>
</organism>
<dbReference type="EC" id="2.1.1.-" evidence="1"/>
<dbReference type="EMBL" id="CP000108">
    <property type="protein sequence ID" value="ABB29073.1"/>
    <property type="molecule type" value="Genomic_DNA"/>
</dbReference>
<dbReference type="SMR" id="Q3APK2"/>
<dbReference type="STRING" id="340177.Cag_1822"/>
<dbReference type="KEGG" id="cch:Cag_1822"/>
<dbReference type="eggNOG" id="COG0357">
    <property type="taxonomic scope" value="Bacteria"/>
</dbReference>
<dbReference type="HOGENOM" id="CLU_065341_2_2_10"/>
<dbReference type="OrthoDB" id="9808773at2"/>
<dbReference type="GO" id="GO:0005829">
    <property type="term" value="C:cytosol"/>
    <property type="evidence" value="ECO:0007669"/>
    <property type="project" value="TreeGrafter"/>
</dbReference>
<dbReference type="GO" id="GO:0070043">
    <property type="term" value="F:rRNA (guanine-N7-)-methyltransferase activity"/>
    <property type="evidence" value="ECO:0007669"/>
    <property type="project" value="UniProtKB-UniRule"/>
</dbReference>
<dbReference type="CDD" id="cd02440">
    <property type="entry name" value="AdoMet_MTases"/>
    <property type="match status" value="1"/>
</dbReference>
<dbReference type="Gene3D" id="3.40.50.150">
    <property type="entry name" value="Vaccinia Virus protein VP39"/>
    <property type="match status" value="1"/>
</dbReference>
<dbReference type="HAMAP" id="MF_00074">
    <property type="entry name" value="16SrRNA_methyltr_G"/>
    <property type="match status" value="1"/>
</dbReference>
<dbReference type="InterPro" id="IPR003682">
    <property type="entry name" value="rRNA_ssu_MeTfrase_G"/>
</dbReference>
<dbReference type="InterPro" id="IPR029063">
    <property type="entry name" value="SAM-dependent_MTases_sf"/>
</dbReference>
<dbReference type="NCBIfam" id="TIGR00138">
    <property type="entry name" value="rsmG_gidB"/>
    <property type="match status" value="1"/>
</dbReference>
<dbReference type="PANTHER" id="PTHR31760">
    <property type="entry name" value="S-ADENOSYL-L-METHIONINE-DEPENDENT METHYLTRANSFERASES SUPERFAMILY PROTEIN"/>
    <property type="match status" value="1"/>
</dbReference>
<dbReference type="PANTHER" id="PTHR31760:SF0">
    <property type="entry name" value="S-ADENOSYL-L-METHIONINE-DEPENDENT METHYLTRANSFERASES SUPERFAMILY PROTEIN"/>
    <property type="match status" value="1"/>
</dbReference>
<dbReference type="Pfam" id="PF02527">
    <property type="entry name" value="GidB"/>
    <property type="match status" value="1"/>
</dbReference>
<dbReference type="PIRSF" id="PIRSF003078">
    <property type="entry name" value="GidB"/>
    <property type="match status" value="1"/>
</dbReference>
<dbReference type="SUPFAM" id="SSF53335">
    <property type="entry name" value="S-adenosyl-L-methionine-dependent methyltransferases"/>
    <property type="match status" value="1"/>
</dbReference>
<reference key="1">
    <citation type="submission" date="2005-08" db="EMBL/GenBank/DDBJ databases">
        <title>Complete sequence of Chlorobium chlorochromatii CaD3.</title>
        <authorList>
            <consortium name="US DOE Joint Genome Institute"/>
            <person name="Copeland A."/>
            <person name="Lucas S."/>
            <person name="Lapidus A."/>
            <person name="Barry K."/>
            <person name="Detter J.C."/>
            <person name="Glavina T."/>
            <person name="Hammon N."/>
            <person name="Israni S."/>
            <person name="Pitluck S."/>
            <person name="Bryant D."/>
            <person name="Schmutz J."/>
            <person name="Larimer F."/>
            <person name="Land M."/>
            <person name="Kyrpides N."/>
            <person name="Ivanova N."/>
            <person name="Richardson P."/>
        </authorList>
    </citation>
    <scope>NUCLEOTIDE SEQUENCE [LARGE SCALE GENOMIC DNA]</scope>
    <source>
        <strain>CaD3</strain>
    </source>
</reference>
<protein>
    <recommendedName>
        <fullName evidence="1">Ribosomal RNA small subunit methyltransferase G</fullName>
        <ecNumber evidence="1">2.1.1.-</ecNumber>
    </recommendedName>
    <alternativeName>
        <fullName evidence="1">16S rRNA 7-methylguanosine methyltransferase</fullName>
        <shortName evidence="1">16S rRNA m7G methyltransferase</shortName>
    </alternativeName>
</protein>
<comment type="function">
    <text evidence="1">Specifically methylates the N7 position of a guanine in 16S rRNA.</text>
</comment>
<comment type="subcellular location">
    <subcellularLocation>
        <location evidence="1">Cytoplasm</location>
    </subcellularLocation>
</comment>
<comment type="similarity">
    <text evidence="1">Belongs to the methyltransferase superfamily. RNA methyltransferase RsmG family.</text>
</comment>
<gene>
    <name evidence="1" type="primary">rsmG</name>
    <name type="ordered locus">Cag_1822</name>
</gene>
<proteinExistence type="inferred from homology"/>
<sequence length="234" mass="26061">MYLLPNTTTITKSTMPHPQQPHAILEGLCKEQSLALAPEMVDKLVEYGRLLEEWNNKINLISRKEDAPIIIKHIFHSLLITQHHTFQTGEKVLDLGTGGGLPGIPLAIIAPQATFLLVDATGKKITACQEMIATLKLTNVTARHLRVEELHGETFHTIVSRQVALLNKLCAYGEPLLHEKGKLICLKGGSLEQEIKQSLEASQKHHGFPARVEEHPIDEVSPIFSEKKIVIAYR</sequence>